<keyword id="KW-0028">Amino-acid biosynthesis</keyword>
<keyword id="KW-0057">Aromatic amino acid biosynthesis</keyword>
<keyword id="KW-0963">Cytoplasm</keyword>
<keyword id="KW-1185">Reference proteome</keyword>
<keyword id="KW-0808">Transferase</keyword>
<accession>B8GF70</accession>
<comment type="function">
    <text evidence="1">Catalyzes the transfer of the enolpyruvyl moiety of phosphoenolpyruvate (PEP) to the 5-hydroxyl of shikimate-3-phosphate (S3P) to produce enolpyruvyl shikimate-3-phosphate and inorganic phosphate.</text>
</comment>
<comment type="catalytic activity">
    <reaction evidence="1">
        <text>3-phosphoshikimate + phosphoenolpyruvate = 5-O-(1-carboxyvinyl)-3-phosphoshikimate + phosphate</text>
        <dbReference type="Rhea" id="RHEA:21256"/>
        <dbReference type="ChEBI" id="CHEBI:43474"/>
        <dbReference type="ChEBI" id="CHEBI:57701"/>
        <dbReference type="ChEBI" id="CHEBI:58702"/>
        <dbReference type="ChEBI" id="CHEBI:145989"/>
        <dbReference type="EC" id="2.5.1.19"/>
    </reaction>
    <physiologicalReaction direction="left-to-right" evidence="1">
        <dbReference type="Rhea" id="RHEA:21257"/>
    </physiologicalReaction>
</comment>
<comment type="pathway">
    <text evidence="1">Metabolic intermediate biosynthesis; chorismate biosynthesis.</text>
</comment>
<comment type="subunit">
    <text evidence="1">Monomer.</text>
</comment>
<comment type="subcellular location">
    <subcellularLocation>
        <location evidence="1">Cytoplasm</location>
    </subcellularLocation>
</comment>
<comment type="similarity">
    <text evidence="1">Belongs to the EPSP synthase family.</text>
</comment>
<proteinExistence type="inferred from homology"/>
<evidence type="ECO:0000255" key="1">
    <source>
        <dbReference type="HAMAP-Rule" id="MF_00210"/>
    </source>
</evidence>
<dbReference type="EC" id="2.5.1.19" evidence="1"/>
<dbReference type="EMBL" id="CP001338">
    <property type="protein sequence ID" value="ACL17876.1"/>
    <property type="molecule type" value="Genomic_DNA"/>
</dbReference>
<dbReference type="RefSeq" id="WP_012619195.1">
    <property type="nucleotide sequence ID" value="NC_011832.1"/>
</dbReference>
<dbReference type="SMR" id="B8GF70"/>
<dbReference type="STRING" id="521011.Mpal_2606"/>
<dbReference type="GeneID" id="7271874"/>
<dbReference type="KEGG" id="mpl:Mpal_2606"/>
<dbReference type="eggNOG" id="arCOG04134">
    <property type="taxonomic scope" value="Archaea"/>
</dbReference>
<dbReference type="HOGENOM" id="CLU_024321_0_0_2"/>
<dbReference type="OrthoDB" id="43788at2157"/>
<dbReference type="UniPathway" id="UPA00053"/>
<dbReference type="Proteomes" id="UP000002457">
    <property type="component" value="Chromosome"/>
</dbReference>
<dbReference type="GO" id="GO:0005737">
    <property type="term" value="C:cytoplasm"/>
    <property type="evidence" value="ECO:0007669"/>
    <property type="project" value="UniProtKB-SubCell"/>
</dbReference>
<dbReference type="GO" id="GO:0003866">
    <property type="term" value="F:3-phosphoshikimate 1-carboxyvinyltransferase activity"/>
    <property type="evidence" value="ECO:0007669"/>
    <property type="project" value="UniProtKB-UniRule"/>
</dbReference>
<dbReference type="GO" id="GO:0008652">
    <property type="term" value="P:amino acid biosynthetic process"/>
    <property type="evidence" value="ECO:0007669"/>
    <property type="project" value="UniProtKB-KW"/>
</dbReference>
<dbReference type="GO" id="GO:0009073">
    <property type="term" value="P:aromatic amino acid family biosynthetic process"/>
    <property type="evidence" value="ECO:0007669"/>
    <property type="project" value="UniProtKB-KW"/>
</dbReference>
<dbReference type="GO" id="GO:0009423">
    <property type="term" value="P:chorismate biosynthetic process"/>
    <property type="evidence" value="ECO:0007669"/>
    <property type="project" value="UniProtKB-UniRule"/>
</dbReference>
<dbReference type="CDD" id="cd01556">
    <property type="entry name" value="EPSP_synthase"/>
    <property type="match status" value="1"/>
</dbReference>
<dbReference type="Gene3D" id="3.65.10.10">
    <property type="entry name" value="Enolpyruvate transferase domain"/>
    <property type="match status" value="2"/>
</dbReference>
<dbReference type="HAMAP" id="MF_00210">
    <property type="entry name" value="EPSP_synth"/>
    <property type="match status" value="1"/>
</dbReference>
<dbReference type="InterPro" id="IPR001986">
    <property type="entry name" value="Enolpyruvate_Tfrase_dom"/>
</dbReference>
<dbReference type="InterPro" id="IPR036968">
    <property type="entry name" value="Enolpyruvate_Tfrase_sf"/>
</dbReference>
<dbReference type="InterPro" id="IPR006264">
    <property type="entry name" value="EPSP_synthase"/>
</dbReference>
<dbReference type="InterPro" id="IPR023193">
    <property type="entry name" value="EPSP_synthase_CS"/>
</dbReference>
<dbReference type="InterPro" id="IPR013792">
    <property type="entry name" value="RNA3'P_cycl/enolpyr_Trfase_a/b"/>
</dbReference>
<dbReference type="NCBIfam" id="TIGR01356">
    <property type="entry name" value="aroA"/>
    <property type="match status" value="1"/>
</dbReference>
<dbReference type="PANTHER" id="PTHR21090">
    <property type="entry name" value="AROM/DEHYDROQUINATE SYNTHASE"/>
    <property type="match status" value="1"/>
</dbReference>
<dbReference type="PANTHER" id="PTHR21090:SF5">
    <property type="entry name" value="PENTAFUNCTIONAL AROM POLYPEPTIDE"/>
    <property type="match status" value="1"/>
</dbReference>
<dbReference type="Pfam" id="PF00275">
    <property type="entry name" value="EPSP_synthase"/>
    <property type="match status" value="1"/>
</dbReference>
<dbReference type="PIRSF" id="PIRSF000505">
    <property type="entry name" value="EPSPS"/>
    <property type="match status" value="1"/>
</dbReference>
<dbReference type="SUPFAM" id="SSF55205">
    <property type="entry name" value="EPT/RTPC-like"/>
    <property type="match status" value="1"/>
</dbReference>
<dbReference type="PROSITE" id="PS00104">
    <property type="entry name" value="EPSP_SYNTHASE_1"/>
    <property type="match status" value="1"/>
</dbReference>
<feature type="chain" id="PRO_1000124693" description="3-phosphoshikimate 1-carboxyvinyltransferase">
    <location>
        <begin position="1"/>
        <end position="423"/>
    </location>
</feature>
<feature type="active site" description="Proton acceptor" evidence="1">
    <location>
        <position position="311"/>
    </location>
</feature>
<feature type="binding site" evidence="1">
    <location>
        <position position="21"/>
    </location>
    <ligand>
        <name>3-phosphoshikimate</name>
        <dbReference type="ChEBI" id="CHEBI:145989"/>
    </ligand>
</feature>
<feature type="binding site" evidence="1">
    <location>
        <position position="21"/>
    </location>
    <ligand>
        <name>phosphoenolpyruvate</name>
        <dbReference type="ChEBI" id="CHEBI:58702"/>
    </ligand>
</feature>
<feature type="binding site" evidence="1">
    <location>
        <position position="22"/>
    </location>
    <ligand>
        <name>3-phosphoshikimate</name>
        <dbReference type="ChEBI" id="CHEBI:145989"/>
    </ligand>
</feature>
<feature type="binding site" evidence="1">
    <location>
        <position position="26"/>
    </location>
    <ligand>
        <name>3-phosphoshikimate</name>
        <dbReference type="ChEBI" id="CHEBI:145989"/>
    </ligand>
</feature>
<feature type="binding site" evidence="1">
    <location>
        <position position="93"/>
    </location>
    <ligand>
        <name>phosphoenolpyruvate</name>
        <dbReference type="ChEBI" id="CHEBI:58702"/>
    </ligand>
</feature>
<feature type="binding site" evidence="1">
    <location>
        <position position="123"/>
    </location>
    <ligand>
        <name>phosphoenolpyruvate</name>
        <dbReference type="ChEBI" id="CHEBI:58702"/>
    </ligand>
</feature>
<feature type="binding site" evidence="1">
    <location>
        <position position="168"/>
    </location>
    <ligand>
        <name>3-phosphoshikimate</name>
        <dbReference type="ChEBI" id="CHEBI:145989"/>
    </ligand>
</feature>
<feature type="binding site" evidence="1">
    <location>
        <position position="169"/>
    </location>
    <ligand>
        <name>3-phosphoshikimate</name>
        <dbReference type="ChEBI" id="CHEBI:145989"/>
    </ligand>
</feature>
<feature type="binding site" evidence="1">
    <location>
        <position position="170"/>
    </location>
    <ligand>
        <name>3-phosphoshikimate</name>
        <dbReference type="ChEBI" id="CHEBI:145989"/>
    </ligand>
</feature>
<feature type="binding site" evidence="1">
    <location>
        <position position="170"/>
    </location>
    <ligand>
        <name>phosphoenolpyruvate</name>
        <dbReference type="ChEBI" id="CHEBI:58702"/>
    </ligand>
</feature>
<feature type="binding site" evidence="1">
    <location>
        <position position="196"/>
    </location>
    <ligand>
        <name>3-phosphoshikimate</name>
        <dbReference type="ChEBI" id="CHEBI:145989"/>
    </ligand>
</feature>
<feature type="binding site" evidence="1">
    <location>
        <position position="311"/>
    </location>
    <ligand>
        <name>3-phosphoshikimate</name>
        <dbReference type="ChEBI" id="CHEBI:145989"/>
    </ligand>
</feature>
<feature type="binding site" evidence="1">
    <location>
        <position position="338"/>
    </location>
    <ligand>
        <name>3-phosphoshikimate</name>
        <dbReference type="ChEBI" id="CHEBI:145989"/>
    </ligand>
</feature>
<feature type="binding site" evidence="1">
    <location>
        <position position="342"/>
    </location>
    <ligand>
        <name>phosphoenolpyruvate</name>
        <dbReference type="ChEBI" id="CHEBI:58702"/>
    </ligand>
</feature>
<feature type="binding site" evidence="1">
    <location>
        <position position="383"/>
    </location>
    <ligand>
        <name>phosphoenolpyruvate</name>
        <dbReference type="ChEBI" id="CHEBI:58702"/>
    </ligand>
</feature>
<feature type="binding site" evidence="1">
    <location>
        <position position="408"/>
    </location>
    <ligand>
        <name>phosphoenolpyruvate</name>
        <dbReference type="ChEBI" id="CHEBI:58702"/>
    </ligand>
</feature>
<name>AROA_METPE</name>
<protein>
    <recommendedName>
        <fullName evidence="1">3-phosphoshikimate 1-carboxyvinyltransferase</fullName>
        <ecNumber evidence="1">2.5.1.19</ecNumber>
    </recommendedName>
    <alternativeName>
        <fullName evidence="1">5-enolpyruvylshikimate-3-phosphate synthase</fullName>
        <shortName evidence="1">EPSP synthase</shortName>
        <shortName evidence="1">EPSPS</shortName>
    </alternativeName>
</protein>
<gene>
    <name evidence="1" type="primary">aroA</name>
    <name type="ordered locus">Mpal_2606</name>
</gene>
<organism>
    <name type="scientific">Methanosphaerula palustris (strain ATCC BAA-1556 / DSM 19958 / E1-9c)</name>
    <dbReference type="NCBI Taxonomy" id="521011"/>
    <lineage>
        <taxon>Archaea</taxon>
        <taxon>Methanobacteriati</taxon>
        <taxon>Methanobacteriota</taxon>
        <taxon>Stenosarchaea group</taxon>
        <taxon>Methanomicrobia</taxon>
        <taxon>Methanomicrobiales</taxon>
        <taxon>Methanoregulaceae</taxon>
        <taxon>Methanosphaerula</taxon>
    </lineage>
</organism>
<reference key="1">
    <citation type="journal article" date="2015" name="Genome Announc.">
        <title>Complete Genome Sequence of Methanosphaerula palustris E1-9CT, a Hydrogenotrophic Methanogen Isolated from a Minerotrophic Fen Peatland.</title>
        <authorList>
            <person name="Cadillo-Quiroz H."/>
            <person name="Browne P."/>
            <person name="Kyrpides N."/>
            <person name="Woyke T."/>
            <person name="Goodwin L."/>
            <person name="Detter C."/>
            <person name="Yavitt J.B."/>
            <person name="Zinder S.H."/>
        </authorList>
    </citation>
    <scope>NUCLEOTIDE SEQUENCE [LARGE SCALE GENOMIC DNA]</scope>
    <source>
        <strain>ATCC BAA-1556 / DSM 19958 / E1-9c</strain>
    </source>
</reference>
<sequence>MDQTLQQHGPVDLAFTAPPSKSFTHRALIIAALADGESLIRGPLIAEDTLLTVRALQALGADITDTPEGYRVQGTDGRPDCAEGTVLDLKNSGTSLRLLSSIALLCSSTAGVTLTGSPRMQQRPIGELGDAIRTLGGSVRYLAADGYPPCVVQGPLVGGEATLDGSVSSQFISSLLLAAPYAVRPVDLKVARQPVSRSYLEITGAVMAAFGVPVRRVGYTHFTVQPARYRGREYTVEGDYSSASYFFALAATLGGKVTVRNLNHDSVQGDRLFVAALKAMGCRVTRETDGVTIERTKNLHGISIDMTTAPDTVQTLAVVAALADSPTTITGVGHLQYKESDRVAVTAGTLRALGCTVDISADAITIHPGPLHGGVIDPHDDHRTAMAFAVLGLAVGDVTIEDPACVGKSFPKFWNALAAGGLL</sequence>